<sequence>MSLVESPPWQALKSKYQELSSLHMRDFFAQDKKRGTRLSLEAAGLYFDYSKNRVDEKTIDLLCESANACNLPLRIEQLFSGKLTNESGEMVGFHTALRQVNNFSFKTNNNAIQEIHASWEKIKKLSIRIREGDYKGFTNKSITDIVNIGIGGSSLGPQMAYNALKPYVKAPLRCHFISNLDDTDFYETVRTLNPETTLFIITSKTFTTKETLENERRATEWLMQAAKKENLIQTHFMAVTAAPEKAHEFGIQKDNIFMLWPWVGGRFSVWSAAGLSLAIAIGWEEFFEFLRGAHAMDTHFRQAEFNKNMPILLALLSIWYINFFHAKTQAIIPYSQRLVYLPDYLTQLHMESLGKSVQLDGSAVHWQTGAVVWGDLGTNSQHSFHQLFLQGTMVIPVDFIAVLKNSRESHWQLPLIANCLGQSQTLMEGYDKEGVMRDLINQGIEHEKAEKLATYRLIRGNNPSNTIILEELNPYSLGSLLALYEHKVYVQSVIWNINPFDQWGVERGKHLAKDILQALQAETDQSSFDSSTERLINYVLKIKGNRP</sequence>
<organism>
    <name type="scientific">Coxiella burnetii (strain CbuK_Q154)</name>
    <name type="common">Coxiella burnetii (strain Q154)</name>
    <dbReference type="NCBI Taxonomy" id="434924"/>
    <lineage>
        <taxon>Bacteria</taxon>
        <taxon>Pseudomonadati</taxon>
        <taxon>Pseudomonadota</taxon>
        <taxon>Gammaproteobacteria</taxon>
        <taxon>Legionellales</taxon>
        <taxon>Coxiellaceae</taxon>
        <taxon>Coxiella</taxon>
    </lineage>
</organism>
<keyword id="KW-0963">Cytoplasm</keyword>
<keyword id="KW-0312">Gluconeogenesis</keyword>
<keyword id="KW-0324">Glycolysis</keyword>
<keyword id="KW-0413">Isomerase</keyword>
<accession>B6J6S3</accession>
<gene>
    <name evidence="1" type="primary">pgi</name>
    <name type="ordered locus">CbuK_0716</name>
</gene>
<feature type="chain" id="PRO_1000125711" description="Glucose-6-phosphate isomerase">
    <location>
        <begin position="1"/>
        <end position="547"/>
    </location>
</feature>
<feature type="active site" description="Proton donor" evidence="1">
    <location>
        <position position="351"/>
    </location>
</feature>
<feature type="active site" evidence="1">
    <location>
        <position position="382"/>
    </location>
</feature>
<feature type="active site" evidence="1">
    <location>
        <position position="509"/>
    </location>
</feature>
<name>G6PI_COXB1</name>
<evidence type="ECO:0000255" key="1">
    <source>
        <dbReference type="HAMAP-Rule" id="MF_00473"/>
    </source>
</evidence>
<protein>
    <recommendedName>
        <fullName evidence="1">Glucose-6-phosphate isomerase</fullName>
        <shortName evidence="1">GPI</shortName>
        <ecNumber evidence="1">5.3.1.9</ecNumber>
    </recommendedName>
    <alternativeName>
        <fullName evidence="1">Phosphoglucose isomerase</fullName>
        <shortName evidence="1">PGI</shortName>
    </alternativeName>
    <alternativeName>
        <fullName evidence="1">Phosphohexose isomerase</fullName>
        <shortName evidence="1">PHI</shortName>
    </alternativeName>
</protein>
<comment type="function">
    <text evidence="1">Catalyzes the reversible isomerization of glucose-6-phosphate to fructose-6-phosphate.</text>
</comment>
<comment type="catalytic activity">
    <reaction evidence="1">
        <text>alpha-D-glucose 6-phosphate = beta-D-fructose 6-phosphate</text>
        <dbReference type="Rhea" id="RHEA:11816"/>
        <dbReference type="ChEBI" id="CHEBI:57634"/>
        <dbReference type="ChEBI" id="CHEBI:58225"/>
        <dbReference type="EC" id="5.3.1.9"/>
    </reaction>
</comment>
<comment type="pathway">
    <text evidence="1">Carbohydrate biosynthesis; gluconeogenesis.</text>
</comment>
<comment type="pathway">
    <text evidence="1">Carbohydrate degradation; glycolysis; D-glyceraldehyde 3-phosphate and glycerone phosphate from D-glucose: step 2/4.</text>
</comment>
<comment type="subcellular location">
    <subcellularLocation>
        <location evidence="1">Cytoplasm</location>
    </subcellularLocation>
</comment>
<comment type="similarity">
    <text evidence="1">Belongs to the GPI family.</text>
</comment>
<dbReference type="EC" id="5.3.1.9" evidence="1"/>
<dbReference type="EMBL" id="CP001020">
    <property type="protein sequence ID" value="ACJ19972.1"/>
    <property type="molecule type" value="Genomic_DNA"/>
</dbReference>
<dbReference type="RefSeq" id="WP_005768849.1">
    <property type="nucleotide sequence ID" value="NC_011528.1"/>
</dbReference>
<dbReference type="SMR" id="B6J6S3"/>
<dbReference type="KEGG" id="cbc:CbuK_0716"/>
<dbReference type="HOGENOM" id="CLU_017947_3_1_6"/>
<dbReference type="UniPathway" id="UPA00109">
    <property type="reaction ID" value="UER00181"/>
</dbReference>
<dbReference type="UniPathway" id="UPA00138"/>
<dbReference type="GO" id="GO:0005829">
    <property type="term" value="C:cytosol"/>
    <property type="evidence" value="ECO:0007669"/>
    <property type="project" value="TreeGrafter"/>
</dbReference>
<dbReference type="GO" id="GO:0097367">
    <property type="term" value="F:carbohydrate derivative binding"/>
    <property type="evidence" value="ECO:0007669"/>
    <property type="project" value="InterPro"/>
</dbReference>
<dbReference type="GO" id="GO:0004347">
    <property type="term" value="F:glucose-6-phosphate isomerase activity"/>
    <property type="evidence" value="ECO:0007669"/>
    <property type="project" value="UniProtKB-UniRule"/>
</dbReference>
<dbReference type="GO" id="GO:0048029">
    <property type="term" value="F:monosaccharide binding"/>
    <property type="evidence" value="ECO:0007669"/>
    <property type="project" value="TreeGrafter"/>
</dbReference>
<dbReference type="GO" id="GO:0006094">
    <property type="term" value="P:gluconeogenesis"/>
    <property type="evidence" value="ECO:0007669"/>
    <property type="project" value="UniProtKB-UniRule"/>
</dbReference>
<dbReference type="GO" id="GO:0051156">
    <property type="term" value="P:glucose 6-phosphate metabolic process"/>
    <property type="evidence" value="ECO:0007669"/>
    <property type="project" value="TreeGrafter"/>
</dbReference>
<dbReference type="GO" id="GO:0006096">
    <property type="term" value="P:glycolytic process"/>
    <property type="evidence" value="ECO:0007669"/>
    <property type="project" value="UniProtKB-UniRule"/>
</dbReference>
<dbReference type="CDD" id="cd05015">
    <property type="entry name" value="SIS_PGI_1"/>
    <property type="match status" value="1"/>
</dbReference>
<dbReference type="CDD" id="cd05016">
    <property type="entry name" value="SIS_PGI_2"/>
    <property type="match status" value="1"/>
</dbReference>
<dbReference type="Gene3D" id="1.10.1390.10">
    <property type="match status" value="1"/>
</dbReference>
<dbReference type="Gene3D" id="3.40.50.10490">
    <property type="entry name" value="Glucose-6-phosphate isomerase like protein, domain 1"/>
    <property type="match status" value="2"/>
</dbReference>
<dbReference type="HAMAP" id="MF_00473">
    <property type="entry name" value="G6P_isomerase"/>
    <property type="match status" value="1"/>
</dbReference>
<dbReference type="InterPro" id="IPR001672">
    <property type="entry name" value="G6P_Isomerase"/>
</dbReference>
<dbReference type="InterPro" id="IPR023096">
    <property type="entry name" value="G6P_Isomerase_C"/>
</dbReference>
<dbReference type="InterPro" id="IPR018189">
    <property type="entry name" value="Phosphoglucose_isomerase_CS"/>
</dbReference>
<dbReference type="InterPro" id="IPR046348">
    <property type="entry name" value="SIS_dom_sf"/>
</dbReference>
<dbReference type="InterPro" id="IPR035476">
    <property type="entry name" value="SIS_PGI_1"/>
</dbReference>
<dbReference type="InterPro" id="IPR035482">
    <property type="entry name" value="SIS_PGI_2"/>
</dbReference>
<dbReference type="NCBIfam" id="NF001211">
    <property type="entry name" value="PRK00179.1"/>
    <property type="match status" value="1"/>
</dbReference>
<dbReference type="PANTHER" id="PTHR11469">
    <property type="entry name" value="GLUCOSE-6-PHOSPHATE ISOMERASE"/>
    <property type="match status" value="1"/>
</dbReference>
<dbReference type="PANTHER" id="PTHR11469:SF1">
    <property type="entry name" value="GLUCOSE-6-PHOSPHATE ISOMERASE"/>
    <property type="match status" value="1"/>
</dbReference>
<dbReference type="Pfam" id="PF00342">
    <property type="entry name" value="PGI"/>
    <property type="match status" value="1"/>
</dbReference>
<dbReference type="PRINTS" id="PR00662">
    <property type="entry name" value="G6PISOMERASE"/>
</dbReference>
<dbReference type="SUPFAM" id="SSF53697">
    <property type="entry name" value="SIS domain"/>
    <property type="match status" value="1"/>
</dbReference>
<dbReference type="PROSITE" id="PS00174">
    <property type="entry name" value="P_GLUCOSE_ISOMERASE_2"/>
    <property type="match status" value="1"/>
</dbReference>
<dbReference type="PROSITE" id="PS51463">
    <property type="entry name" value="P_GLUCOSE_ISOMERASE_3"/>
    <property type="match status" value="1"/>
</dbReference>
<reference key="1">
    <citation type="journal article" date="2009" name="Infect. Immun.">
        <title>Comparative genomics reveal extensive transposon-mediated genomic plasticity and diversity among potential effector proteins within the genus Coxiella.</title>
        <authorList>
            <person name="Beare P.A."/>
            <person name="Unsworth N."/>
            <person name="Andoh M."/>
            <person name="Voth D.E."/>
            <person name="Omsland A."/>
            <person name="Gilk S.D."/>
            <person name="Williams K.P."/>
            <person name="Sobral B.W."/>
            <person name="Kupko J.J. III"/>
            <person name="Porcella S.F."/>
            <person name="Samuel J.E."/>
            <person name="Heinzen R.A."/>
        </authorList>
    </citation>
    <scope>NUCLEOTIDE SEQUENCE [LARGE SCALE GENOMIC DNA]</scope>
    <source>
        <strain>CbuK_Q154</strain>
    </source>
</reference>
<proteinExistence type="inferred from homology"/>